<keyword id="KW-0963">Cytoplasm</keyword>
<keyword id="KW-0489">Methyltransferase</keyword>
<keyword id="KW-0694">RNA-binding</keyword>
<keyword id="KW-0698">rRNA processing</keyword>
<keyword id="KW-0949">S-adenosyl-L-methionine</keyword>
<keyword id="KW-0808">Transferase</keyword>
<proteinExistence type="inferred from homology"/>
<evidence type="ECO:0000255" key="1">
    <source>
        <dbReference type="HAMAP-Rule" id="MF_00607"/>
    </source>
</evidence>
<comment type="function">
    <text evidence="1">Specifically dimethylates two adjacent adenosines (A1518 and A1519) in the loop of a conserved hairpin near the 3'-end of 16S rRNA in the 30S particle. May play a critical role in biogenesis of 30S subunits.</text>
</comment>
<comment type="catalytic activity">
    <reaction evidence="1">
        <text>adenosine(1518)/adenosine(1519) in 16S rRNA + 4 S-adenosyl-L-methionine = N(6)-dimethyladenosine(1518)/N(6)-dimethyladenosine(1519) in 16S rRNA + 4 S-adenosyl-L-homocysteine + 4 H(+)</text>
        <dbReference type="Rhea" id="RHEA:19609"/>
        <dbReference type="Rhea" id="RHEA-COMP:10232"/>
        <dbReference type="Rhea" id="RHEA-COMP:10233"/>
        <dbReference type="ChEBI" id="CHEBI:15378"/>
        <dbReference type="ChEBI" id="CHEBI:57856"/>
        <dbReference type="ChEBI" id="CHEBI:59789"/>
        <dbReference type="ChEBI" id="CHEBI:74411"/>
        <dbReference type="ChEBI" id="CHEBI:74493"/>
        <dbReference type="EC" id="2.1.1.182"/>
    </reaction>
</comment>
<comment type="subcellular location">
    <subcellularLocation>
        <location evidence="1">Cytoplasm</location>
    </subcellularLocation>
</comment>
<comment type="similarity">
    <text evidence="1">Belongs to the class I-like SAM-binding methyltransferase superfamily. rRNA adenine N(6)-methyltransferase family. RsmA subfamily.</text>
</comment>
<dbReference type="EC" id="2.1.1.182" evidence="1"/>
<dbReference type="EMBL" id="CP000730">
    <property type="protein sequence ID" value="ABX28519.1"/>
    <property type="molecule type" value="Genomic_DNA"/>
</dbReference>
<dbReference type="RefSeq" id="WP_000886500.1">
    <property type="nucleotide sequence ID" value="NC_010079.1"/>
</dbReference>
<dbReference type="SMR" id="A8Z0Y8"/>
<dbReference type="KEGG" id="sax:USA300HOU_0493"/>
<dbReference type="HOGENOM" id="CLU_041220_0_0_9"/>
<dbReference type="GO" id="GO:0005829">
    <property type="term" value="C:cytosol"/>
    <property type="evidence" value="ECO:0007669"/>
    <property type="project" value="TreeGrafter"/>
</dbReference>
<dbReference type="GO" id="GO:0052908">
    <property type="term" value="F:16S rRNA (adenine(1518)-N(6)/adenine(1519)-N(6))-dimethyltransferase activity"/>
    <property type="evidence" value="ECO:0007669"/>
    <property type="project" value="UniProtKB-EC"/>
</dbReference>
<dbReference type="GO" id="GO:0003723">
    <property type="term" value="F:RNA binding"/>
    <property type="evidence" value="ECO:0007669"/>
    <property type="project" value="UniProtKB-KW"/>
</dbReference>
<dbReference type="CDD" id="cd02440">
    <property type="entry name" value="AdoMet_MTases"/>
    <property type="match status" value="1"/>
</dbReference>
<dbReference type="FunFam" id="1.10.8.100:FF:000002">
    <property type="entry name" value="Ribosomal RNA small subunit methyltransferase A"/>
    <property type="match status" value="1"/>
</dbReference>
<dbReference type="FunFam" id="3.40.50.150:FF:000023">
    <property type="entry name" value="Ribosomal RNA small subunit methyltransferase A"/>
    <property type="match status" value="1"/>
</dbReference>
<dbReference type="Gene3D" id="1.10.8.100">
    <property type="entry name" value="Ribosomal RNA adenine dimethylase-like, domain 2"/>
    <property type="match status" value="1"/>
</dbReference>
<dbReference type="Gene3D" id="3.40.50.150">
    <property type="entry name" value="Vaccinia Virus protein VP39"/>
    <property type="match status" value="1"/>
</dbReference>
<dbReference type="HAMAP" id="MF_00607">
    <property type="entry name" value="16SrRNA_methyltr_A"/>
    <property type="match status" value="1"/>
</dbReference>
<dbReference type="InterPro" id="IPR001737">
    <property type="entry name" value="KsgA/Erm"/>
</dbReference>
<dbReference type="InterPro" id="IPR023165">
    <property type="entry name" value="rRNA_Ade_diMease-like_C"/>
</dbReference>
<dbReference type="InterPro" id="IPR020596">
    <property type="entry name" value="rRNA_Ade_Mease_Trfase_CS"/>
</dbReference>
<dbReference type="InterPro" id="IPR020598">
    <property type="entry name" value="rRNA_Ade_methylase_Trfase_N"/>
</dbReference>
<dbReference type="InterPro" id="IPR011530">
    <property type="entry name" value="rRNA_adenine_dimethylase"/>
</dbReference>
<dbReference type="InterPro" id="IPR029063">
    <property type="entry name" value="SAM-dependent_MTases_sf"/>
</dbReference>
<dbReference type="NCBIfam" id="TIGR00755">
    <property type="entry name" value="ksgA"/>
    <property type="match status" value="1"/>
</dbReference>
<dbReference type="PANTHER" id="PTHR11727">
    <property type="entry name" value="DIMETHYLADENOSINE TRANSFERASE"/>
    <property type="match status" value="1"/>
</dbReference>
<dbReference type="PANTHER" id="PTHR11727:SF7">
    <property type="entry name" value="DIMETHYLADENOSINE TRANSFERASE-RELATED"/>
    <property type="match status" value="1"/>
</dbReference>
<dbReference type="Pfam" id="PF00398">
    <property type="entry name" value="RrnaAD"/>
    <property type="match status" value="1"/>
</dbReference>
<dbReference type="SMART" id="SM00650">
    <property type="entry name" value="rADc"/>
    <property type="match status" value="1"/>
</dbReference>
<dbReference type="SUPFAM" id="SSF53335">
    <property type="entry name" value="S-adenosyl-L-methionine-dependent methyltransferases"/>
    <property type="match status" value="1"/>
</dbReference>
<dbReference type="PROSITE" id="PS01131">
    <property type="entry name" value="RRNA_A_DIMETH"/>
    <property type="match status" value="1"/>
</dbReference>
<dbReference type="PROSITE" id="PS51689">
    <property type="entry name" value="SAM_RNA_A_N6_MT"/>
    <property type="match status" value="1"/>
</dbReference>
<feature type="chain" id="PRO_1000082566" description="Ribosomal RNA small subunit methyltransferase A">
    <location>
        <begin position="1"/>
        <end position="297"/>
    </location>
</feature>
<feature type="binding site" evidence="1">
    <location>
        <position position="31"/>
    </location>
    <ligand>
        <name>S-adenosyl-L-methionine</name>
        <dbReference type="ChEBI" id="CHEBI:59789"/>
    </ligand>
</feature>
<feature type="binding site" evidence="1">
    <location>
        <position position="33"/>
    </location>
    <ligand>
        <name>S-adenosyl-L-methionine</name>
        <dbReference type="ChEBI" id="CHEBI:59789"/>
    </ligand>
</feature>
<feature type="binding site" evidence="1">
    <location>
        <position position="58"/>
    </location>
    <ligand>
        <name>S-adenosyl-L-methionine</name>
        <dbReference type="ChEBI" id="CHEBI:59789"/>
    </ligand>
</feature>
<feature type="binding site" evidence="1">
    <location>
        <position position="79"/>
    </location>
    <ligand>
        <name>S-adenosyl-L-methionine</name>
        <dbReference type="ChEBI" id="CHEBI:59789"/>
    </ligand>
</feature>
<feature type="binding site" evidence="1">
    <location>
        <position position="104"/>
    </location>
    <ligand>
        <name>S-adenosyl-L-methionine</name>
        <dbReference type="ChEBI" id="CHEBI:59789"/>
    </ligand>
</feature>
<feature type="binding site" evidence="1">
    <location>
        <position position="129"/>
    </location>
    <ligand>
        <name>S-adenosyl-L-methionine</name>
        <dbReference type="ChEBI" id="CHEBI:59789"/>
    </ligand>
</feature>
<gene>
    <name evidence="1" type="primary">rsmA</name>
    <name evidence="1" type="synonym">ksgA</name>
    <name type="ordered locus">USA300HOU_0493</name>
</gene>
<reference key="1">
    <citation type="journal article" date="2007" name="BMC Microbiol.">
        <title>Subtle genetic changes enhance virulence of methicillin resistant and sensitive Staphylococcus aureus.</title>
        <authorList>
            <person name="Highlander S.K."/>
            <person name="Hulten K.G."/>
            <person name="Qin X."/>
            <person name="Jiang H."/>
            <person name="Yerrapragada S."/>
            <person name="Mason E.O. Jr."/>
            <person name="Shang Y."/>
            <person name="Williams T.M."/>
            <person name="Fortunov R.M."/>
            <person name="Liu Y."/>
            <person name="Igboeli O."/>
            <person name="Petrosino J."/>
            <person name="Tirumalai M."/>
            <person name="Uzman A."/>
            <person name="Fox G.E."/>
            <person name="Cardenas A.M."/>
            <person name="Muzny D.M."/>
            <person name="Hemphill L."/>
            <person name="Ding Y."/>
            <person name="Dugan S."/>
            <person name="Blyth P.R."/>
            <person name="Buhay C.J."/>
            <person name="Dinh H.H."/>
            <person name="Hawes A.C."/>
            <person name="Holder M."/>
            <person name="Kovar C.L."/>
            <person name="Lee S.L."/>
            <person name="Liu W."/>
            <person name="Nazareth L.V."/>
            <person name="Wang Q."/>
            <person name="Zhou J."/>
            <person name="Kaplan S.L."/>
            <person name="Weinstock G.M."/>
        </authorList>
    </citation>
    <scope>NUCLEOTIDE SEQUENCE [LARGE SCALE GENOMIC DNA]</scope>
    <source>
        <strain>USA300 / TCH1516</strain>
    </source>
</reference>
<protein>
    <recommendedName>
        <fullName evidence="1">Ribosomal RNA small subunit methyltransferase A</fullName>
        <ecNumber evidence="1">2.1.1.182</ecNumber>
    </recommendedName>
    <alternativeName>
        <fullName evidence="1">16S rRNA (adenine(1518)-N(6)/adenine(1519)-N(6))-dimethyltransferase</fullName>
    </alternativeName>
    <alternativeName>
        <fullName evidence="1">16S rRNA dimethyladenosine transferase</fullName>
    </alternativeName>
    <alternativeName>
        <fullName evidence="1">16S rRNA dimethylase</fullName>
    </alternativeName>
    <alternativeName>
        <fullName evidence="1">S-adenosylmethionine-6-N', N'-adenosyl(rRNA) dimethyltransferase</fullName>
    </alternativeName>
</protein>
<sequence length="297" mass="33738">MLDNKDIATPSRTRALLDKYGFNFKKSLGQNFLIDVNIINNIIDASDIDAQTGVIEIGPGMGSLTEQLARHAKRVLAFEIDQRLIPVLNDTLSPYDNVTVINEDILKANIKEAVENHLQDCEKIMVVANLPYYITTPILLNLMQQDIPIDGYVVMMQKEVGERLNAEVGSKAYGSLSIVVQYYTETSKVLTVPKSVFMPPPNVDSIVVKLMQRTEPLVTVDNEEAFFKLAKAAFAQRRKTINNNYQNYFKDGKQHKEVILQWLEQAGIDPRRRGETLSIQDFAKLYEEKKKFPQLEN</sequence>
<organism>
    <name type="scientific">Staphylococcus aureus (strain USA300 / TCH1516)</name>
    <dbReference type="NCBI Taxonomy" id="451516"/>
    <lineage>
        <taxon>Bacteria</taxon>
        <taxon>Bacillati</taxon>
        <taxon>Bacillota</taxon>
        <taxon>Bacilli</taxon>
        <taxon>Bacillales</taxon>
        <taxon>Staphylococcaceae</taxon>
        <taxon>Staphylococcus</taxon>
    </lineage>
</organism>
<name>RSMA_STAAT</name>
<accession>A8Z0Y8</accession>